<accession>B3LQ47</accession>
<keyword id="KW-0472">Membrane</keyword>
<keyword id="KW-0496">Mitochondrion</keyword>
<keyword id="KW-0999">Mitochondrion inner membrane</keyword>
<keyword id="KW-0812">Transmembrane</keyword>
<keyword id="KW-1133">Transmembrane helix</keyword>
<organism>
    <name type="scientific">Saccharomyces cerevisiae (strain RM11-1a)</name>
    <name type="common">Baker's yeast</name>
    <dbReference type="NCBI Taxonomy" id="285006"/>
    <lineage>
        <taxon>Eukaryota</taxon>
        <taxon>Fungi</taxon>
        <taxon>Dikarya</taxon>
        <taxon>Ascomycota</taxon>
        <taxon>Saccharomycotina</taxon>
        <taxon>Saccharomycetes</taxon>
        <taxon>Saccharomycetales</taxon>
        <taxon>Saccharomycetaceae</taxon>
        <taxon>Saccharomyces</taxon>
    </lineage>
</organism>
<gene>
    <name type="primary">COA3</name>
    <name type="synonym">COX25</name>
    <name type="synonym">RRG10</name>
    <name type="ORF">SCRG_03606</name>
</gene>
<proteinExistence type="inferred from homology"/>
<evidence type="ECO:0000250" key="1"/>
<evidence type="ECO:0000255" key="2"/>
<evidence type="ECO:0000305" key="3"/>
<comment type="function">
    <text evidence="1">Required for assembly of cytochrome c oxidase (complex IV). With COX14, negatively regulates COX1 translation and is involved in MSS51 association with newly synthesized COX1 (By similarity).</text>
</comment>
<comment type="subunit">
    <text evidence="1">Component of 250-400 kDa complexes called cytochrome oxidase assembly intermediates or COA complexes composed at least COA3, COX14, COX5A, SHY1 and SSC1. Interacts with COX1 and MSS51.</text>
</comment>
<comment type="subcellular location">
    <subcellularLocation>
        <location evidence="1">Mitochondrion inner membrane</location>
        <topology>Single-pass membrane protein</topology>
    </subcellularLocation>
</comment>
<comment type="similarity">
    <text evidence="3">Belongs to the COA3 family.</text>
</comment>
<dbReference type="EMBL" id="CH408050">
    <property type="protein sequence ID" value="EDV12700.1"/>
    <property type="molecule type" value="Genomic_DNA"/>
</dbReference>
<dbReference type="SMR" id="B3LQ47"/>
<dbReference type="HOGENOM" id="CLU_153999_0_0_1"/>
<dbReference type="OrthoDB" id="6910at4893"/>
<dbReference type="Proteomes" id="UP000008335">
    <property type="component" value="Unassembled WGS sequence"/>
</dbReference>
<dbReference type="GO" id="GO:0005743">
    <property type="term" value="C:mitochondrial inner membrane"/>
    <property type="evidence" value="ECO:0007669"/>
    <property type="project" value="UniProtKB-SubCell"/>
</dbReference>
<dbReference type="GO" id="GO:0033617">
    <property type="term" value="P:mitochondrial cytochrome c oxidase assembly"/>
    <property type="evidence" value="ECO:0007669"/>
    <property type="project" value="InterPro"/>
</dbReference>
<dbReference type="InterPro" id="IPR041752">
    <property type="entry name" value="Coa3"/>
</dbReference>
<dbReference type="PANTHER" id="PTHR15642:SF3">
    <property type="entry name" value="CYTOCHROME C OXIDASE ASSEMBLY FACTOR 3 HOMOLOG, MITOCHONDRIAL"/>
    <property type="match status" value="1"/>
</dbReference>
<dbReference type="PANTHER" id="PTHR15642">
    <property type="entry name" value="CYTOCHROME C OXIDASE ASSEMBLY FACTOR 3, MITOCHONDRIAL"/>
    <property type="match status" value="1"/>
</dbReference>
<name>COA3_YEAS1</name>
<feature type="chain" id="PRO_0000405449" description="Cytochrome c oxidase assembly factor 3, mitochondrial">
    <location>
        <begin position="1"/>
        <end position="85"/>
    </location>
</feature>
<feature type="topological domain" description="Mitochondrial matrix" evidence="1">
    <location>
        <begin position="1"/>
        <end position="26"/>
    </location>
</feature>
<feature type="transmembrane region" description="Helical" evidence="2">
    <location>
        <begin position="27"/>
        <end position="49"/>
    </location>
</feature>
<feature type="topological domain" description="Mitochondrial intermembrane" evidence="1">
    <location>
        <begin position="50"/>
        <end position="85"/>
    </location>
</feature>
<sequence>MVLNPSKYQDTRTWKMTPAMIRARKPFFKGNMLGLTLLLGVTGSVYYYTYHFLHKDNDFADVPIPPIDPQELEALKKEYEAKKKA</sequence>
<protein>
    <recommendedName>
        <fullName>Cytochrome c oxidase assembly factor 3, mitochondrial</fullName>
    </recommendedName>
    <alternativeName>
        <fullName>Cytochrome c oxidase protein 25</fullName>
    </alternativeName>
    <alternativeName>
        <fullName>Required for respiratory growth protein 10</fullName>
    </alternativeName>
</protein>
<reference key="1">
    <citation type="submission" date="2005-03" db="EMBL/GenBank/DDBJ databases">
        <title>Annotation of the Saccharomyces cerevisiae RM11-1a genome.</title>
        <authorList>
            <consortium name="The Broad Institute Genome Sequencing Platform"/>
            <person name="Birren B.W."/>
            <person name="Lander E.S."/>
            <person name="Galagan J.E."/>
            <person name="Nusbaum C."/>
            <person name="Devon K."/>
            <person name="Cuomo C."/>
            <person name="Jaffe D.B."/>
            <person name="Butler J."/>
            <person name="Alvarez P."/>
            <person name="Gnerre S."/>
            <person name="Grabherr M."/>
            <person name="Kleber M."/>
            <person name="Mauceli E.W."/>
            <person name="Brockman W."/>
            <person name="MacCallum I.A."/>
            <person name="Rounsley S."/>
            <person name="Young S.K."/>
            <person name="LaButti K."/>
            <person name="Pushparaj V."/>
            <person name="DeCaprio D."/>
            <person name="Crawford M."/>
            <person name="Koehrsen M."/>
            <person name="Engels R."/>
            <person name="Montgomery P."/>
            <person name="Pearson M."/>
            <person name="Howarth C."/>
            <person name="Larson L."/>
            <person name="Luoma S."/>
            <person name="White J."/>
            <person name="O'Leary S."/>
            <person name="Kodira C.D."/>
            <person name="Zeng Q."/>
            <person name="Yandava C."/>
            <person name="Alvarado L."/>
            <person name="Pratt S."/>
            <person name="Kruglyak L."/>
        </authorList>
    </citation>
    <scope>NUCLEOTIDE SEQUENCE [LARGE SCALE GENOMIC DNA]</scope>
    <source>
        <strain>RM11-1a</strain>
    </source>
</reference>